<dbReference type="EC" id="2.4.2.57" evidence="1"/>
<dbReference type="EMBL" id="CP000099">
    <property type="protein sequence ID" value="AAZ72072.1"/>
    <property type="molecule type" value="Genomic_DNA"/>
</dbReference>
<dbReference type="SMR" id="Q466X0"/>
<dbReference type="STRING" id="269797.Mbar_A3188"/>
<dbReference type="PaxDb" id="269797-Mbar_A3188"/>
<dbReference type="KEGG" id="mba:Mbar_A3188"/>
<dbReference type="eggNOG" id="arCOG02013">
    <property type="taxonomic scope" value="Archaea"/>
</dbReference>
<dbReference type="HOGENOM" id="CLU_025040_6_0_2"/>
<dbReference type="OrthoDB" id="9827at2157"/>
<dbReference type="GO" id="GO:0005829">
    <property type="term" value="C:cytosol"/>
    <property type="evidence" value="ECO:0007669"/>
    <property type="project" value="TreeGrafter"/>
</dbReference>
<dbReference type="GO" id="GO:0004645">
    <property type="term" value="F:1,4-alpha-oligoglucan phosphorylase activity"/>
    <property type="evidence" value="ECO:0007669"/>
    <property type="project" value="InterPro"/>
</dbReference>
<dbReference type="GO" id="GO:0016208">
    <property type="term" value="F:AMP binding"/>
    <property type="evidence" value="ECO:0007669"/>
    <property type="project" value="UniProtKB-UniRule"/>
</dbReference>
<dbReference type="GO" id="GO:0016763">
    <property type="term" value="F:pentosyltransferase activity"/>
    <property type="evidence" value="ECO:0007669"/>
    <property type="project" value="UniProtKB-UniRule"/>
</dbReference>
<dbReference type="GO" id="GO:0006196">
    <property type="term" value="P:AMP catabolic process"/>
    <property type="evidence" value="ECO:0007669"/>
    <property type="project" value="UniProtKB-UniRule"/>
</dbReference>
<dbReference type="GO" id="GO:0046125">
    <property type="term" value="P:pyrimidine deoxyribonucleoside metabolic process"/>
    <property type="evidence" value="ECO:0007669"/>
    <property type="project" value="InterPro"/>
</dbReference>
<dbReference type="GO" id="GO:0006206">
    <property type="term" value="P:pyrimidine nucleobase metabolic process"/>
    <property type="evidence" value="ECO:0007669"/>
    <property type="project" value="InterPro"/>
</dbReference>
<dbReference type="CDD" id="cd02775">
    <property type="entry name" value="MopB_CT"/>
    <property type="match status" value="1"/>
</dbReference>
<dbReference type="Gene3D" id="1.20.970.50">
    <property type="match status" value="1"/>
</dbReference>
<dbReference type="Gene3D" id="2.40.40.20">
    <property type="match status" value="1"/>
</dbReference>
<dbReference type="Gene3D" id="3.40.1030.10">
    <property type="entry name" value="Nucleoside phosphorylase/phosphoribosyltransferase catalytic domain"/>
    <property type="match status" value="1"/>
</dbReference>
<dbReference type="Gene3D" id="3.90.1170.30">
    <property type="entry name" value="Pyrimidine nucleoside phosphorylase-like, C-terminal domain"/>
    <property type="match status" value="1"/>
</dbReference>
<dbReference type="HAMAP" id="MF_02132">
    <property type="entry name" value="AMP_phosphorylase"/>
    <property type="match status" value="1"/>
</dbReference>
<dbReference type="InterPro" id="IPR017713">
    <property type="entry name" value="AMP_phosphorylase"/>
</dbReference>
<dbReference type="InterPro" id="IPR009010">
    <property type="entry name" value="Asp_de-COase-like_dom_sf"/>
</dbReference>
<dbReference type="InterPro" id="IPR000312">
    <property type="entry name" value="Glycosyl_Trfase_fam3"/>
</dbReference>
<dbReference type="InterPro" id="IPR017459">
    <property type="entry name" value="Glycosyl_Trfase_fam3_N_dom"/>
</dbReference>
<dbReference type="InterPro" id="IPR036320">
    <property type="entry name" value="Glycosyl_Trfase_fam3_N_dom_sf"/>
</dbReference>
<dbReference type="InterPro" id="IPR035902">
    <property type="entry name" value="Nuc_phospho_transferase"/>
</dbReference>
<dbReference type="InterPro" id="IPR036566">
    <property type="entry name" value="PYNP-like_C_sf"/>
</dbReference>
<dbReference type="InterPro" id="IPR013102">
    <property type="entry name" value="PYNP_C"/>
</dbReference>
<dbReference type="InterPro" id="IPR017872">
    <property type="entry name" value="Pyrmidine_PPase_CS"/>
</dbReference>
<dbReference type="InterPro" id="IPR013466">
    <property type="entry name" value="Thymidine/AMP_Pase"/>
</dbReference>
<dbReference type="InterPro" id="IPR000053">
    <property type="entry name" value="Thymidine/pyrmidine_PPase"/>
</dbReference>
<dbReference type="NCBIfam" id="TIGR03327">
    <property type="entry name" value="AMP_phos"/>
    <property type="match status" value="1"/>
</dbReference>
<dbReference type="NCBIfam" id="TIGR02645">
    <property type="entry name" value="ARCH_P_rylase"/>
    <property type="match status" value="1"/>
</dbReference>
<dbReference type="NCBIfam" id="NF003338">
    <property type="entry name" value="PRK04350.1"/>
    <property type="match status" value="1"/>
</dbReference>
<dbReference type="PANTHER" id="PTHR10515">
    <property type="entry name" value="THYMIDINE PHOSPHORYLASE"/>
    <property type="match status" value="1"/>
</dbReference>
<dbReference type="PANTHER" id="PTHR10515:SF0">
    <property type="entry name" value="THYMIDINE PHOSPHORYLASE"/>
    <property type="match status" value="1"/>
</dbReference>
<dbReference type="Pfam" id="PF02885">
    <property type="entry name" value="Glycos_trans_3N"/>
    <property type="match status" value="1"/>
</dbReference>
<dbReference type="Pfam" id="PF00591">
    <property type="entry name" value="Glycos_transf_3"/>
    <property type="match status" value="1"/>
</dbReference>
<dbReference type="Pfam" id="PF07831">
    <property type="entry name" value="PYNP_C"/>
    <property type="match status" value="1"/>
</dbReference>
<dbReference type="PIRSF" id="PIRSF000478">
    <property type="entry name" value="TP_PyNP"/>
    <property type="match status" value="1"/>
</dbReference>
<dbReference type="SMART" id="SM00941">
    <property type="entry name" value="PYNP_C"/>
    <property type="match status" value="1"/>
</dbReference>
<dbReference type="SUPFAM" id="SSF50692">
    <property type="entry name" value="ADC-like"/>
    <property type="match status" value="1"/>
</dbReference>
<dbReference type="SUPFAM" id="SSF52418">
    <property type="entry name" value="Nucleoside phosphorylase/phosphoribosyltransferase catalytic domain"/>
    <property type="match status" value="1"/>
</dbReference>
<dbReference type="SUPFAM" id="SSF47648">
    <property type="entry name" value="Nucleoside phosphorylase/phosphoribosyltransferase N-terminal domain"/>
    <property type="match status" value="1"/>
</dbReference>
<dbReference type="SUPFAM" id="SSF54680">
    <property type="entry name" value="Pyrimidine nucleoside phosphorylase C-terminal domain"/>
    <property type="match status" value="1"/>
</dbReference>
<dbReference type="PROSITE" id="PS00647">
    <property type="entry name" value="THYMID_PHOSPHORYLASE"/>
    <property type="match status" value="1"/>
</dbReference>
<protein>
    <recommendedName>
        <fullName evidence="1">AMP phosphorylase</fullName>
        <shortName evidence="1">AMPpase</shortName>
        <ecNumber evidence="1">2.4.2.57</ecNumber>
    </recommendedName>
    <alternativeName>
        <fullName evidence="1">Nucleoside monophosphate phosphorylase</fullName>
        <shortName evidence="1">NMP phosphorylase</shortName>
    </alternativeName>
</protein>
<comment type="function">
    <text evidence="1">Catalyzes the conversion of AMP and phosphate to adenine and ribose 1,5-bisphosphate (R15P). Exhibits phosphorylase activity toward CMP and UMP in addition to AMP. Functions in an archaeal AMP degradation pathway, together with R15P isomerase and RubisCO.</text>
</comment>
<comment type="catalytic activity">
    <reaction evidence="1">
        <text>AMP + phosphate = alpha-D-ribose 1,5-bisphosphate + adenine</text>
        <dbReference type="Rhea" id="RHEA:36975"/>
        <dbReference type="ChEBI" id="CHEBI:16708"/>
        <dbReference type="ChEBI" id="CHEBI:43474"/>
        <dbReference type="ChEBI" id="CHEBI:68688"/>
        <dbReference type="ChEBI" id="CHEBI:456215"/>
        <dbReference type="EC" id="2.4.2.57"/>
    </reaction>
</comment>
<comment type="catalytic activity">
    <reaction evidence="1">
        <text>CMP + phosphate = cytosine + alpha-D-ribose 1,5-bisphosphate</text>
        <dbReference type="Rhea" id="RHEA:36987"/>
        <dbReference type="ChEBI" id="CHEBI:16040"/>
        <dbReference type="ChEBI" id="CHEBI:43474"/>
        <dbReference type="ChEBI" id="CHEBI:60377"/>
        <dbReference type="ChEBI" id="CHEBI:68688"/>
        <dbReference type="EC" id="2.4.2.57"/>
    </reaction>
</comment>
<comment type="catalytic activity">
    <reaction evidence="1">
        <text>UMP + phosphate = alpha-D-ribose 1,5-bisphosphate + uracil</text>
        <dbReference type="Rhea" id="RHEA:36991"/>
        <dbReference type="ChEBI" id="CHEBI:17568"/>
        <dbReference type="ChEBI" id="CHEBI:43474"/>
        <dbReference type="ChEBI" id="CHEBI:57865"/>
        <dbReference type="ChEBI" id="CHEBI:68688"/>
        <dbReference type="EC" id="2.4.2.57"/>
    </reaction>
</comment>
<comment type="similarity">
    <text evidence="1">Belongs to the thymidine/pyrimidine-nucleoside phosphorylase family. Type 2 subfamily.</text>
</comment>
<accession>Q466X0</accession>
<organism>
    <name type="scientific">Methanosarcina barkeri (strain Fusaro / DSM 804)</name>
    <dbReference type="NCBI Taxonomy" id="269797"/>
    <lineage>
        <taxon>Archaea</taxon>
        <taxon>Methanobacteriati</taxon>
        <taxon>Methanobacteriota</taxon>
        <taxon>Stenosarchaea group</taxon>
        <taxon>Methanomicrobia</taxon>
        <taxon>Methanosarcinales</taxon>
        <taxon>Methanosarcinaceae</taxon>
        <taxon>Methanosarcina</taxon>
    </lineage>
</organism>
<feature type="chain" id="PRO_0000225645" description="AMP phosphorylase">
    <location>
        <begin position="1"/>
        <end position="506"/>
    </location>
</feature>
<feature type="active site" description="Proton donor" evidence="1">
    <location>
        <position position="255"/>
    </location>
</feature>
<feature type="binding site" evidence="1">
    <location>
        <position position="167"/>
    </location>
    <ligand>
        <name>AMP</name>
        <dbReference type="ChEBI" id="CHEBI:456215"/>
    </ligand>
</feature>
<feature type="binding site" evidence="1">
    <location>
        <begin position="193"/>
        <end position="198"/>
    </location>
    <ligand>
        <name>AMP</name>
        <dbReference type="ChEBI" id="CHEBI:456215"/>
    </ligand>
</feature>
<feature type="binding site" evidence="1">
    <location>
        <position position="202"/>
    </location>
    <ligand>
        <name>AMP</name>
        <dbReference type="ChEBI" id="CHEBI:456215"/>
    </ligand>
</feature>
<feature type="binding site" evidence="1">
    <location>
        <position position="263"/>
    </location>
    <ligand>
        <name>AMP</name>
        <dbReference type="ChEBI" id="CHEBI:456215"/>
    </ligand>
</feature>
<feature type="binding site" evidence="1">
    <location>
        <position position="287"/>
    </location>
    <ligand>
        <name>AMP</name>
        <dbReference type="ChEBI" id="CHEBI:456215"/>
    </ligand>
</feature>
<proteinExistence type="inferred from homology"/>
<keyword id="KW-0328">Glycosyltransferase</keyword>
<keyword id="KW-0808">Transferase</keyword>
<reference key="1">
    <citation type="journal article" date="2006" name="J. Bacteriol.">
        <title>The Methanosarcina barkeri genome: comparative analysis with Methanosarcina acetivorans and Methanosarcina mazei reveals extensive rearrangement within methanosarcinal genomes.</title>
        <authorList>
            <person name="Maeder D.L."/>
            <person name="Anderson I."/>
            <person name="Brettin T.S."/>
            <person name="Bruce D.C."/>
            <person name="Gilna P."/>
            <person name="Han C.S."/>
            <person name="Lapidus A."/>
            <person name="Metcalf W.W."/>
            <person name="Saunders E."/>
            <person name="Tapia R."/>
            <person name="Sowers K.R."/>
        </authorList>
    </citation>
    <scope>NUCLEOTIDE SEQUENCE [LARGE SCALE GENOMIC DNA]</scope>
    <source>
        <strain>Fusaro / DSM 804</strain>
    </source>
</reference>
<name>AMPPA_METBF</name>
<evidence type="ECO:0000255" key="1">
    <source>
        <dbReference type="HAMAP-Rule" id="MF_02132"/>
    </source>
</evidence>
<gene>
    <name type="ordered locus">Mbar_A3188</name>
</gene>
<sequence>MQLKLEHFNIKIGQHKILLNIADAKELGVNPGDRVRIRGRESISAIADTTDDMVPPGTLGVFSEVYEHFVNWDKPVEVVPAFRSKSASVIKKMMDKKPVVQEEIKTLVNDIVEENLSEIELSAFITSSYIHGMTDDEVEWLTRAMIESGDTIEFDTHPIMDKHSIGGVPGNKISLLVVPIIAANGLLIPKTSSRAITGAGGTADLMEVLCPVEFSSQEVKEITEKVGGALVWGGATNIAPADDKLIRVEYPLSIDPYYQMLASIMAKKGAIGADNVVMDIPVGPSTKVPTVQEGQKLARDLINLGHRLGMNVECAITYGSSPIGRKVGPSLEVREALKVLESMEGPNSLIEKSAALAGILLEMGGAAPRDRGKEIALETLRSGKALEKMKQIIEAQGGDPKITSADIQVGQYTADILASADGYVIEFDNKWIIEIARLAGAPNDKGAGVAIHKKMGESVKKGDPILTIYAEKEFKLETALATAQRTNPIVVEGMLLKRIPGTYGFQ</sequence>